<protein>
    <recommendedName>
        <fullName evidence="1">UDP-N-acetylglucosamine 1-carboxyvinyltransferase</fullName>
        <ecNumber evidence="1">2.5.1.7</ecNumber>
    </recommendedName>
    <alternativeName>
        <fullName evidence="1">Enoylpyruvate transferase</fullName>
    </alternativeName>
    <alternativeName>
        <fullName evidence="1">UDP-N-acetylglucosamine enolpyruvyl transferase</fullName>
        <shortName evidence="1">EPT</shortName>
    </alternativeName>
</protein>
<keyword id="KW-0131">Cell cycle</keyword>
<keyword id="KW-0132">Cell division</keyword>
<keyword id="KW-0133">Cell shape</keyword>
<keyword id="KW-0961">Cell wall biogenesis/degradation</keyword>
<keyword id="KW-0963">Cytoplasm</keyword>
<keyword id="KW-0573">Peptidoglycan synthesis</keyword>
<keyword id="KW-0670">Pyruvate</keyword>
<keyword id="KW-0808">Transferase</keyword>
<reference key="1">
    <citation type="journal article" date="2010" name="J. Bacteriol.">
        <title>Whole genome sequences of two Xylella fastidiosa strains (M12 and M23) causing almond leaf scorch disease in California.</title>
        <authorList>
            <person name="Chen J."/>
            <person name="Xie G."/>
            <person name="Han S."/>
            <person name="Chertkov O."/>
            <person name="Sims D."/>
            <person name="Civerolo E.L."/>
        </authorList>
    </citation>
    <scope>NUCLEOTIDE SEQUENCE [LARGE SCALE GENOMIC DNA]</scope>
    <source>
        <strain>M12</strain>
    </source>
</reference>
<proteinExistence type="inferred from homology"/>
<comment type="function">
    <text evidence="1">Cell wall formation. Adds enolpyruvyl to UDP-N-acetylglucosamine.</text>
</comment>
<comment type="catalytic activity">
    <reaction evidence="1">
        <text>phosphoenolpyruvate + UDP-N-acetyl-alpha-D-glucosamine = UDP-N-acetyl-3-O-(1-carboxyvinyl)-alpha-D-glucosamine + phosphate</text>
        <dbReference type="Rhea" id="RHEA:18681"/>
        <dbReference type="ChEBI" id="CHEBI:43474"/>
        <dbReference type="ChEBI" id="CHEBI:57705"/>
        <dbReference type="ChEBI" id="CHEBI:58702"/>
        <dbReference type="ChEBI" id="CHEBI:68483"/>
        <dbReference type="EC" id="2.5.1.7"/>
    </reaction>
</comment>
<comment type="pathway">
    <text evidence="1">Cell wall biogenesis; peptidoglycan biosynthesis.</text>
</comment>
<comment type="subcellular location">
    <subcellularLocation>
        <location evidence="1">Cytoplasm</location>
    </subcellularLocation>
</comment>
<comment type="similarity">
    <text evidence="1">Belongs to the EPSP synthase family. MurA subfamily.</text>
</comment>
<organism>
    <name type="scientific">Xylella fastidiosa (strain M12)</name>
    <dbReference type="NCBI Taxonomy" id="405440"/>
    <lineage>
        <taxon>Bacteria</taxon>
        <taxon>Pseudomonadati</taxon>
        <taxon>Pseudomonadota</taxon>
        <taxon>Gammaproteobacteria</taxon>
        <taxon>Lysobacterales</taxon>
        <taxon>Lysobacteraceae</taxon>
        <taxon>Xylella</taxon>
    </lineage>
</organism>
<sequence>MSKIVVAGGTPLYGDVRISGAKNAVLPILCATLLADAPVEISNVPYLHDVITMINLLRELGAGVTMNEGIEAKGRSITVDPRWVRQRVVPYDLVKTMRASVLLLGPLLACYGAAEVALPGGCAIGSRPVDQHIRGLQSLGAEITVENGYIKASVSQGRLKGGRFVFDVVSVTGTENLLMAAAVAQGTSVIENAAMEPEVVDLAECLITLGARVEGAGTPRIVVEGVERLKSGQYAVLPDRIETGTFLVATAMTGGRISMQQVRPQTLDAVLGKLTEAGACIEIGADSIRLDMQGRRPCSVNLTTAPYPGFPTDMQAQFMALNCVAEGVGVIKETIFENRFMHVDELLRLGAKIQIEGHTAIVQGVERLSGAPVMATDLRASASLILAGLVAEGETIIDRIYHLDRGYENIEKKLGVLGASIRRMT</sequence>
<name>MURA_XYLFM</name>
<dbReference type="EC" id="2.5.1.7" evidence="1"/>
<dbReference type="EMBL" id="CP000941">
    <property type="protein sequence ID" value="ACA11754.1"/>
    <property type="molecule type" value="Genomic_DNA"/>
</dbReference>
<dbReference type="RefSeq" id="WP_012337756.1">
    <property type="nucleotide sequence ID" value="NC_010513.1"/>
</dbReference>
<dbReference type="SMR" id="B0U6N8"/>
<dbReference type="KEGG" id="xfm:Xfasm12_0763"/>
<dbReference type="HOGENOM" id="CLU_027387_0_0_6"/>
<dbReference type="UniPathway" id="UPA00219"/>
<dbReference type="GO" id="GO:0005737">
    <property type="term" value="C:cytoplasm"/>
    <property type="evidence" value="ECO:0007669"/>
    <property type="project" value="UniProtKB-SubCell"/>
</dbReference>
<dbReference type="GO" id="GO:0008760">
    <property type="term" value="F:UDP-N-acetylglucosamine 1-carboxyvinyltransferase activity"/>
    <property type="evidence" value="ECO:0007669"/>
    <property type="project" value="UniProtKB-UniRule"/>
</dbReference>
<dbReference type="GO" id="GO:0051301">
    <property type="term" value="P:cell division"/>
    <property type="evidence" value="ECO:0007669"/>
    <property type="project" value="UniProtKB-KW"/>
</dbReference>
<dbReference type="GO" id="GO:0071555">
    <property type="term" value="P:cell wall organization"/>
    <property type="evidence" value="ECO:0007669"/>
    <property type="project" value="UniProtKB-KW"/>
</dbReference>
<dbReference type="GO" id="GO:0009252">
    <property type="term" value="P:peptidoglycan biosynthetic process"/>
    <property type="evidence" value="ECO:0007669"/>
    <property type="project" value="UniProtKB-UniRule"/>
</dbReference>
<dbReference type="GO" id="GO:0008360">
    <property type="term" value="P:regulation of cell shape"/>
    <property type="evidence" value="ECO:0007669"/>
    <property type="project" value="UniProtKB-KW"/>
</dbReference>
<dbReference type="GO" id="GO:0019277">
    <property type="term" value="P:UDP-N-acetylgalactosamine biosynthetic process"/>
    <property type="evidence" value="ECO:0007669"/>
    <property type="project" value="InterPro"/>
</dbReference>
<dbReference type="CDD" id="cd01555">
    <property type="entry name" value="UdpNAET"/>
    <property type="match status" value="1"/>
</dbReference>
<dbReference type="FunFam" id="3.65.10.10:FF:000002">
    <property type="entry name" value="UDP-N-acetylglucosamine 1-carboxyvinyltransferase"/>
    <property type="match status" value="1"/>
</dbReference>
<dbReference type="Gene3D" id="3.65.10.10">
    <property type="entry name" value="Enolpyruvate transferase domain"/>
    <property type="match status" value="2"/>
</dbReference>
<dbReference type="HAMAP" id="MF_00111">
    <property type="entry name" value="MurA"/>
    <property type="match status" value="1"/>
</dbReference>
<dbReference type="InterPro" id="IPR001986">
    <property type="entry name" value="Enolpyruvate_Tfrase_dom"/>
</dbReference>
<dbReference type="InterPro" id="IPR036968">
    <property type="entry name" value="Enolpyruvate_Tfrase_sf"/>
</dbReference>
<dbReference type="InterPro" id="IPR050068">
    <property type="entry name" value="MurA_subfamily"/>
</dbReference>
<dbReference type="InterPro" id="IPR013792">
    <property type="entry name" value="RNA3'P_cycl/enolpyr_Trfase_a/b"/>
</dbReference>
<dbReference type="InterPro" id="IPR005750">
    <property type="entry name" value="UDP_GlcNAc_COvinyl_MurA"/>
</dbReference>
<dbReference type="NCBIfam" id="TIGR01072">
    <property type="entry name" value="murA"/>
    <property type="match status" value="1"/>
</dbReference>
<dbReference type="NCBIfam" id="NF006873">
    <property type="entry name" value="PRK09369.1"/>
    <property type="match status" value="1"/>
</dbReference>
<dbReference type="PANTHER" id="PTHR43783">
    <property type="entry name" value="UDP-N-ACETYLGLUCOSAMINE 1-CARBOXYVINYLTRANSFERASE"/>
    <property type="match status" value="1"/>
</dbReference>
<dbReference type="PANTHER" id="PTHR43783:SF1">
    <property type="entry name" value="UDP-N-ACETYLGLUCOSAMINE 1-CARBOXYVINYLTRANSFERASE"/>
    <property type="match status" value="1"/>
</dbReference>
<dbReference type="Pfam" id="PF00275">
    <property type="entry name" value="EPSP_synthase"/>
    <property type="match status" value="1"/>
</dbReference>
<dbReference type="SUPFAM" id="SSF55205">
    <property type="entry name" value="EPT/RTPC-like"/>
    <property type="match status" value="1"/>
</dbReference>
<feature type="chain" id="PRO_1000094737" description="UDP-N-acetylglucosamine 1-carboxyvinyltransferase">
    <location>
        <begin position="1"/>
        <end position="425"/>
    </location>
</feature>
<feature type="active site" description="Proton donor" evidence="1">
    <location>
        <position position="122"/>
    </location>
</feature>
<feature type="binding site" evidence="1">
    <location>
        <begin position="22"/>
        <end position="23"/>
    </location>
    <ligand>
        <name>phosphoenolpyruvate</name>
        <dbReference type="ChEBI" id="CHEBI:58702"/>
    </ligand>
</feature>
<feature type="binding site" evidence="1">
    <location>
        <position position="98"/>
    </location>
    <ligand>
        <name>UDP-N-acetyl-alpha-D-glucosamine</name>
        <dbReference type="ChEBI" id="CHEBI:57705"/>
    </ligand>
</feature>
<feature type="binding site" evidence="1">
    <location>
        <begin position="127"/>
        <end position="131"/>
    </location>
    <ligand>
        <name>UDP-N-acetyl-alpha-D-glucosamine</name>
        <dbReference type="ChEBI" id="CHEBI:57705"/>
    </ligand>
</feature>
<feature type="binding site" evidence="1">
    <location>
        <position position="313"/>
    </location>
    <ligand>
        <name>UDP-N-acetyl-alpha-D-glucosamine</name>
        <dbReference type="ChEBI" id="CHEBI:57705"/>
    </ligand>
</feature>
<feature type="binding site" evidence="1">
    <location>
        <position position="335"/>
    </location>
    <ligand>
        <name>UDP-N-acetyl-alpha-D-glucosamine</name>
        <dbReference type="ChEBI" id="CHEBI:57705"/>
    </ligand>
</feature>
<feature type="modified residue" description="2-(S-cysteinyl)pyruvic acid O-phosphothioketal" evidence="1">
    <location>
        <position position="122"/>
    </location>
</feature>
<gene>
    <name evidence="1" type="primary">murA</name>
    <name type="ordered locus">Xfasm12_0763</name>
</gene>
<accession>B0U6N8</accession>
<evidence type="ECO:0000255" key="1">
    <source>
        <dbReference type="HAMAP-Rule" id="MF_00111"/>
    </source>
</evidence>